<reference key="1">
    <citation type="submission" date="2006-10" db="EMBL/GenBank/DDBJ databases">
        <title>Complete sequence of chromosome of Pelobacter propionicus DSM 2379.</title>
        <authorList>
            <consortium name="US DOE Joint Genome Institute"/>
            <person name="Copeland A."/>
            <person name="Lucas S."/>
            <person name="Lapidus A."/>
            <person name="Barry K."/>
            <person name="Detter J.C."/>
            <person name="Glavina del Rio T."/>
            <person name="Hammon N."/>
            <person name="Israni S."/>
            <person name="Dalin E."/>
            <person name="Tice H."/>
            <person name="Pitluck S."/>
            <person name="Saunders E."/>
            <person name="Brettin T."/>
            <person name="Bruce D."/>
            <person name="Han C."/>
            <person name="Tapia R."/>
            <person name="Schmutz J."/>
            <person name="Larimer F."/>
            <person name="Land M."/>
            <person name="Hauser L."/>
            <person name="Kyrpides N."/>
            <person name="Kim E."/>
            <person name="Lovley D."/>
            <person name="Richardson P."/>
        </authorList>
    </citation>
    <scope>NUCLEOTIDE SEQUENCE [LARGE SCALE GENOMIC DNA]</scope>
    <source>
        <strain>DSM 2379 / NBRC 103807 / OttBd1</strain>
    </source>
</reference>
<keyword id="KW-0456">Lyase</keyword>
<keyword id="KW-0501">Molybdenum cofactor biosynthesis</keyword>
<keyword id="KW-1185">Reference proteome</keyword>
<proteinExistence type="inferred from homology"/>
<feature type="chain" id="PRO_1000085678" description="Cyclic pyranopterin monophosphate synthase">
    <location>
        <begin position="1"/>
        <end position="160"/>
    </location>
</feature>
<feature type="active site" evidence="1">
    <location>
        <position position="127"/>
    </location>
</feature>
<feature type="binding site" evidence="1">
    <location>
        <begin position="74"/>
        <end position="76"/>
    </location>
    <ligand>
        <name>substrate</name>
    </ligand>
</feature>
<feature type="binding site" evidence="1">
    <location>
        <begin position="112"/>
        <end position="113"/>
    </location>
    <ligand>
        <name>substrate</name>
    </ligand>
</feature>
<sequence length="160" mass="16960">MNFNHFDESGNAVMVDVSHKQPTLRTAVAAARVGMSPELLAAIREGGMAKGDVLGVARLAGIMAAKKTPDLIPLSHPLAIHSVAVDYELDSGAGTIQVRCTVRALERTGVEMEAMTGASLAALTIYDMCKGSDKSITIGDIRLLYKEGGKSGVYRREEGQ</sequence>
<organism>
    <name type="scientific">Pelobacter propionicus (strain DSM 2379 / NBRC 103807 / OttBd1)</name>
    <dbReference type="NCBI Taxonomy" id="338966"/>
    <lineage>
        <taxon>Bacteria</taxon>
        <taxon>Pseudomonadati</taxon>
        <taxon>Thermodesulfobacteriota</taxon>
        <taxon>Desulfuromonadia</taxon>
        <taxon>Desulfuromonadales</taxon>
        <taxon>Desulfuromonadaceae</taxon>
        <taxon>Pelobacter</taxon>
    </lineage>
</organism>
<name>MOAC_PELPD</name>
<dbReference type="EC" id="4.6.1.17" evidence="1"/>
<dbReference type="EMBL" id="CP000482">
    <property type="protein sequence ID" value="ABK98168.1"/>
    <property type="molecule type" value="Genomic_DNA"/>
</dbReference>
<dbReference type="RefSeq" id="WP_011734481.1">
    <property type="nucleotide sequence ID" value="NC_008609.1"/>
</dbReference>
<dbReference type="SMR" id="A1ALE8"/>
<dbReference type="STRING" id="338966.Ppro_0537"/>
<dbReference type="KEGG" id="ppd:Ppro_0537"/>
<dbReference type="eggNOG" id="COG0315">
    <property type="taxonomic scope" value="Bacteria"/>
</dbReference>
<dbReference type="HOGENOM" id="CLU_074693_1_1_7"/>
<dbReference type="OrthoDB" id="9794429at2"/>
<dbReference type="UniPathway" id="UPA00344"/>
<dbReference type="Proteomes" id="UP000006732">
    <property type="component" value="Chromosome"/>
</dbReference>
<dbReference type="GO" id="GO:0061799">
    <property type="term" value="F:cyclic pyranopterin monophosphate synthase activity"/>
    <property type="evidence" value="ECO:0007669"/>
    <property type="project" value="UniProtKB-UniRule"/>
</dbReference>
<dbReference type="GO" id="GO:0006777">
    <property type="term" value="P:Mo-molybdopterin cofactor biosynthetic process"/>
    <property type="evidence" value="ECO:0007669"/>
    <property type="project" value="UniProtKB-UniRule"/>
</dbReference>
<dbReference type="CDD" id="cd01420">
    <property type="entry name" value="MoaC_PE"/>
    <property type="match status" value="1"/>
</dbReference>
<dbReference type="Gene3D" id="3.30.70.640">
    <property type="entry name" value="Molybdopterin cofactor biosynthesis C (MoaC) domain"/>
    <property type="match status" value="1"/>
</dbReference>
<dbReference type="HAMAP" id="MF_01224_B">
    <property type="entry name" value="MoaC_B"/>
    <property type="match status" value="1"/>
</dbReference>
<dbReference type="InterPro" id="IPR023045">
    <property type="entry name" value="MoaC"/>
</dbReference>
<dbReference type="InterPro" id="IPR047594">
    <property type="entry name" value="MoaC_bact/euk"/>
</dbReference>
<dbReference type="InterPro" id="IPR036522">
    <property type="entry name" value="MoaC_sf"/>
</dbReference>
<dbReference type="InterPro" id="IPR050105">
    <property type="entry name" value="MoCo_biosynth_MoaA/MoaC"/>
</dbReference>
<dbReference type="InterPro" id="IPR002820">
    <property type="entry name" value="Mopterin_CF_biosynth-C_dom"/>
</dbReference>
<dbReference type="NCBIfam" id="TIGR00581">
    <property type="entry name" value="moaC"/>
    <property type="match status" value="1"/>
</dbReference>
<dbReference type="NCBIfam" id="NF006870">
    <property type="entry name" value="PRK09364.1"/>
    <property type="match status" value="1"/>
</dbReference>
<dbReference type="PANTHER" id="PTHR22960:SF29">
    <property type="entry name" value="CYCLIC PYRANOPTERIN MONOPHOSPHATE SYNTHASE"/>
    <property type="match status" value="1"/>
</dbReference>
<dbReference type="PANTHER" id="PTHR22960">
    <property type="entry name" value="MOLYBDOPTERIN COFACTOR SYNTHESIS PROTEIN A"/>
    <property type="match status" value="1"/>
</dbReference>
<dbReference type="Pfam" id="PF01967">
    <property type="entry name" value="MoaC"/>
    <property type="match status" value="1"/>
</dbReference>
<dbReference type="SUPFAM" id="SSF55040">
    <property type="entry name" value="Molybdenum cofactor biosynthesis protein C, MoaC"/>
    <property type="match status" value="1"/>
</dbReference>
<evidence type="ECO:0000255" key="1">
    <source>
        <dbReference type="HAMAP-Rule" id="MF_01224"/>
    </source>
</evidence>
<protein>
    <recommendedName>
        <fullName evidence="1">Cyclic pyranopterin monophosphate synthase</fullName>
        <ecNumber evidence="1">4.6.1.17</ecNumber>
    </recommendedName>
    <alternativeName>
        <fullName evidence="1">Molybdenum cofactor biosynthesis protein C</fullName>
    </alternativeName>
</protein>
<accession>A1ALE8</accession>
<gene>
    <name evidence="1" type="primary">moaC</name>
    <name type="ordered locus">Ppro_0537</name>
</gene>
<comment type="function">
    <text evidence="1">Catalyzes the conversion of (8S)-3',8-cyclo-7,8-dihydroguanosine 5'-triphosphate to cyclic pyranopterin monophosphate (cPMP).</text>
</comment>
<comment type="catalytic activity">
    <reaction evidence="1">
        <text>(8S)-3',8-cyclo-7,8-dihydroguanosine 5'-triphosphate = cyclic pyranopterin phosphate + diphosphate</text>
        <dbReference type="Rhea" id="RHEA:49580"/>
        <dbReference type="ChEBI" id="CHEBI:33019"/>
        <dbReference type="ChEBI" id="CHEBI:59648"/>
        <dbReference type="ChEBI" id="CHEBI:131766"/>
        <dbReference type="EC" id="4.6.1.17"/>
    </reaction>
</comment>
<comment type="pathway">
    <text evidence="1">Cofactor biosynthesis; molybdopterin biosynthesis.</text>
</comment>
<comment type="subunit">
    <text evidence="1">Homohexamer; trimer of dimers.</text>
</comment>
<comment type="similarity">
    <text evidence="1">Belongs to the MoaC family.</text>
</comment>